<protein>
    <recommendedName>
        <fullName evidence="1">1-(5-phosphoribosyl)-5-[(5-phosphoribosylamino)methylideneamino] imidazole-4-carboxamide isomerase</fullName>
        <ecNumber evidence="1">5.3.1.16</ecNumber>
    </recommendedName>
    <alternativeName>
        <fullName evidence="1">Phosphoribosylformimino-5-aminoimidazole carboxamide ribotide isomerase</fullName>
    </alternativeName>
</protein>
<accession>Q4QN70</accession>
<name>HIS4_HAEI8</name>
<reference key="1">
    <citation type="journal article" date="2005" name="J. Bacteriol.">
        <title>Genomic sequence of an otitis media isolate of nontypeable Haemophilus influenzae: comparative study with H. influenzae serotype d, strain KW20.</title>
        <authorList>
            <person name="Harrison A."/>
            <person name="Dyer D.W."/>
            <person name="Gillaspy A."/>
            <person name="Ray W.C."/>
            <person name="Mungur R."/>
            <person name="Carson M.B."/>
            <person name="Zhong H."/>
            <person name="Gipson J."/>
            <person name="Gipson M."/>
            <person name="Johnson L.S."/>
            <person name="Lewis L."/>
            <person name="Bakaletz L.O."/>
            <person name="Munson R.S. Jr."/>
        </authorList>
    </citation>
    <scope>NUCLEOTIDE SEQUENCE [LARGE SCALE GENOMIC DNA]</scope>
    <source>
        <strain>86-028NP</strain>
    </source>
</reference>
<proteinExistence type="inferred from homology"/>
<keyword id="KW-0028">Amino-acid biosynthesis</keyword>
<keyword id="KW-0963">Cytoplasm</keyword>
<keyword id="KW-0368">Histidine biosynthesis</keyword>
<keyword id="KW-0413">Isomerase</keyword>
<organism>
    <name type="scientific">Haemophilus influenzae (strain 86-028NP)</name>
    <dbReference type="NCBI Taxonomy" id="281310"/>
    <lineage>
        <taxon>Bacteria</taxon>
        <taxon>Pseudomonadati</taxon>
        <taxon>Pseudomonadota</taxon>
        <taxon>Gammaproteobacteria</taxon>
        <taxon>Pasteurellales</taxon>
        <taxon>Pasteurellaceae</taxon>
        <taxon>Haemophilus</taxon>
    </lineage>
</organism>
<dbReference type="EC" id="5.3.1.16" evidence="1"/>
<dbReference type="EMBL" id="CP000057">
    <property type="protein sequence ID" value="AAX87527.1"/>
    <property type="molecule type" value="Genomic_DNA"/>
</dbReference>
<dbReference type="RefSeq" id="WP_005649383.1">
    <property type="nucleotide sequence ID" value="NC_007146.2"/>
</dbReference>
<dbReference type="SMR" id="Q4QN70"/>
<dbReference type="GeneID" id="93219487"/>
<dbReference type="KEGG" id="hit:NTHI0604"/>
<dbReference type="HOGENOM" id="CLU_048577_1_2_6"/>
<dbReference type="UniPathway" id="UPA00031">
    <property type="reaction ID" value="UER00009"/>
</dbReference>
<dbReference type="Proteomes" id="UP000002525">
    <property type="component" value="Chromosome"/>
</dbReference>
<dbReference type="GO" id="GO:0005737">
    <property type="term" value="C:cytoplasm"/>
    <property type="evidence" value="ECO:0007669"/>
    <property type="project" value="UniProtKB-SubCell"/>
</dbReference>
<dbReference type="GO" id="GO:0003949">
    <property type="term" value="F:1-(5-phosphoribosyl)-5-[(5-phosphoribosylamino)methylideneamino]imidazole-4-carboxamide isomerase activity"/>
    <property type="evidence" value="ECO:0007669"/>
    <property type="project" value="UniProtKB-UniRule"/>
</dbReference>
<dbReference type="GO" id="GO:0000105">
    <property type="term" value="P:L-histidine biosynthetic process"/>
    <property type="evidence" value="ECO:0007669"/>
    <property type="project" value="UniProtKB-UniRule"/>
</dbReference>
<dbReference type="GO" id="GO:0000162">
    <property type="term" value="P:L-tryptophan biosynthetic process"/>
    <property type="evidence" value="ECO:0007669"/>
    <property type="project" value="TreeGrafter"/>
</dbReference>
<dbReference type="CDD" id="cd04732">
    <property type="entry name" value="HisA"/>
    <property type="match status" value="1"/>
</dbReference>
<dbReference type="FunFam" id="3.20.20.70:FF:000009">
    <property type="entry name" value="1-(5-phosphoribosyl)-5-[(5-phosphoribosylamino)methylideneamino] imidazole-4-carboxamide isomerase"/>
    <property type="match status" value="1"/>
</dbReference>
<dbReference type="Gene3D" id="3.20.20.70">
    <property type="entry name" value="Aldolase class I"/>
    <property type="match status" value="1"/>
</dbReference>
<dbReference type="HAMAP" id="MF_01014">
    <property type="entry name" value="HisA"/>
    <property type="match status" value="1"/>
</dbReference>
<dbReference type="InterPro" id="IPR013785">
    <property type="entry name" value="Aldolase_TIM"/>
</dbReference>
<dbReference type="InterPro" id="IPR006062">
    <property type="entry name" value="His_biosynth"/>
</dbReference>
<dbReference type="InterPro" id="IPR006063">
    <property type="entry name" value="HisA_bact_arch"/>
</dbReference>
<dbReference type="InterPro" id="IPR044524">
    <property type="entry name" value="Isoase_HisA-like"/>
</dbReference>
<dbReference type="InterPro" id="IPR023016">
    <property type="entry name" value="Isoase_HisA-like_bact"/>
</dbReference>
<dbReference type="InterPro" id="IPR011060">
    <property type="entry name" value="RibuloseP-bd_barrel"/>
</dbReference>
<dbReference type="NCBIfam" id="TIGR00007">
    <property type="entry name" value="1-(5-phosphoribosyl)-5-[(5-phosphoribosylamino)methylideneamino]imidazole-4-carboxamide isomerase"/>
    <property type="match status" value="1"/>
</dbReference>
<dbReference type="PANTHER" id="PTHR43090">
    <property type="entry name" value="1-(5-PHOSPHORIBOSYL)-5-[(5-PHOSPHORIBOSYLAMINO)METHYLIDENEAMINO] IMIDAZOLE-4-CARBOXAMIDE ISOMERASE"/>
    <property type="match status" value="1"/>
</dbReference>
<dbReference type="PANTHER" id="PTHR43090:SF2">
    <property type="entry name" value="1-(5-PHOSPHORIBOSYL)-5-[(5-PHOSPHORIBOSYLAMINO)METHYLIDENEAMINO] IMIDAZOLE-4-CARBOXAMIDE ISOMERASE"/>
    <property type="match status" value="1"/>
</dbReference>
<dbReference type="Pfam" id="PF00977">
    <property type="entry name" value="His_biosynth"/>
    <property type="match status" value="1"/>
</dbReference>
<dbReference type="SUPFAM" id="SSF51366">
    <property type="entry name" value="Ribulose-phoshate binding barrel"/>
    <property type="match status" value="1"/>
</dbReference>
<feature type="chain" id="PRO_0000229059" description="1-(5-phosphoribosyl)-5-[(5-phosphoribosylamino)methylideneamino] imidazole-4-carboxamide isomerase">
    <location>
        <begin position="1"/>
        <end position="249"/>
    </location>
</feature>
<feature type="active site" description="Proton acceptor" evidence="1">
    <location>
        <position position="11"/>
    </location>
</feature>
<feature type="active site" description="Proton donor" evidence="1">
    <location>
        <position position="133"/>
    </location>
</feature>
<evidence type="ECO:0000255" key="1">
    <source>
        <dbReference type="HAMAP-Rule" id="MF_01014"/>
    </source>
</evidence>
<gene>
    <name evidence="1" type="primary">hisA</name>
    <name type="ordered locus">NTHI0604</name>
</gene>
<comment type="catalytic activity">
    <reaction evidence="1">
        <text>1-(5-phospho-beta-D-ribosyl)-5-[(5-phospho-beta-D-ribosylamino)methylideneamino]imidazole-4-carboxamide = 5-[(5-phospho-1-deoxy-D-ribulos-1-ylimino)methylamino]-1-(5-phospho-beta-D-ribosyl)imidazole-4-carboxamide</text>
        <dbReference type="Rhea" id="RHEA:15469"/>
        <dbReference type="ChEBI" id="CHEBI:58435"/>
        <dbReference type="ChEBI" id="CHEBI:58525"/>
        <dbReference type="EC" id="5.3.1.16"/>
    </reaction>
</comment>
<comment type="pathway">
    <text evidence="1">Amino-acid biosynthesis; L-histidine biosynthesis; L-histidine from 5-phospho-alpha-D-ribose 1-diphosphate: step 4/9.</text>
</comment>
<comment type="subcellular location">
    <subcellularLocation>
        <location evidence="1">Cytoplasm</location>
    </subcellularLocation>
</comment>
<comment type="similarity">
    <text evidence="1">Belongs to the HisA/HisF family.</text>
</comment>
<sequence length="249" mass="26861">MKQSIIIPALDLINGQVVRLHQGDYAKQTTYSDNPIKQFDNYVRQGAKQLHLVDLTGAKNPQSRQTALIGKIVEATQCKVQVGGGIRTEQDVADLLAVGANRVVIGSTAVTHRSMVKNWFIKYGAEKFVLALDVNINASGQKIVAISGWQEESGVLLETLIEDFQTVGLQQVLCTDISRDGTLTGSNIGLYQEICEKYPPIQFQSSGGIGSLADIEALKGTGVSGVIVGRALLEGKFTLSEAIKCWQNG</sequence>